<reference key="1">
    <citation type="journal article" date="1996" name="J. Biol. Chem.">
        <title>Carbon monoxide dehydrogenase from Methanosarcina frisia Go1. Characterization of the enzyme and the regulated expression of two operon-like cdh gene clusters.</title>
        <authorList>
            <person name="Eggen R.I.L."/>
            <person name="van Kranenburg R."/>
            <person name="Vriesema A.J.M."/>
            <person name="Geerling A.C.M."/>
            <person name="Verhagen M.F.J.M."/>
            <person name="Hagen W.R."/>
            <person name="de Vos W.M."/>
        </authorList>
    </citation>
    <scope>NUCLEOTIDE SEQUENCE [GENOMIC DNA]</scope>
    <source>
        <strain>ATCC BAA-159 / DSM 3647 / Goe1 / Go1 / JCM 11833 / OCM 88</strain>
    </source>
</reference>
<reference key="2">
    <citation type="journal article" date="2002" name="J. Mol. Microbiol. Biotechnol.">
        <title>The genome of Methanosarcina mazei: evidence for lateral gene transfer between Bacteria and Archaea.</title>
        <authorList>
            <person name="Deppenmeier U."/>
            <person name="Johann A."/>
            <person name="Hartsch T."/>
            <person name="Merkl R."/>
            <person name="Schmitz R.A."/>
            <person name="Martinez-Arias R."/>
            <person name="Henne A."/>
            <person name="Wiezer A."/>
            <person name="Baeumer S."/>
            <person name="Jacobi C."/>
            <person name="Brueggemann H."/>
            <person name="Lienard T."/>
            <person name="Christmann A."/>
            <person name="Boemecke M."/>
            <person name="Steckel S."/>
            <person name="Bhattacharyya A."/>
            <person name="Lykidis A."/>
            <person name="Overbeek R."/>
            <person name="Klenk H.-P."/>
            <person name="Gunsalus R.P."/>
            <person name="Fritz H.-J."/>
            <person name="Gottschalk G."/>
        </authorList>
    </citation>
    <scope>NUCLEOTIDE SEQUENCE [LARGE SCALE GENOMIC DNA]</scope>
    <source>
        <strain>ATCC BAA-159 / DSM 3647 / Goe1 / Go1 / JCM 11833 / OCM 88</strain>
    </source>
</reference>
<protein>
    <recommendedName>
        <fullName evidence="1">Acetyl-CoA decarbonylase/synthase complex subunit epsilon 1</fullName>
        <shortName evidence="1">ACDS complex subunit epsilon 1</shortName>
    </recommendedName>
    <alternativeName>
        <fullName evidence="1">ACDS complex carbon monoxide dehydrogenase subunit epsilon 1</fullName>
        <shortName evidence="1">ACDS CODH subunit epsilon 1</shortName>
    </alternativeName>
</protein>
<sequence length="170" mass="18697">MVDTTKNTKLFTSYGVTTSKAVNPDMVAKMISKAKRPLFVVGTGVLRPEVLDRAVKIAQKANIPIAATGSSLKGFLDKGVDAKYINLHQLGFYLTDPAWPGLDGKGNYDTIIVLEFKKYYINQVLSGTKNFSNVKAISIGRDYIQNATMSFGNISREDHYAALDELIDNL</sequence>
<proteinExistence type="evidence at protein level"/>
<keyword id="KW-0484">Methanogenesis</keyword>
<gene>
    <name type="primary">cdhB1</name>
    <name type="ordered locus">MM_2088</name>
</gene>
<accession>Q49162</accession>
<feature type="chain" id="PRO_0000155092" description="Acetyl-CoA decarbonylase/synthase complex subunit epsilon 1">
    <location>
        <begin position="1"/>
        <end position="170"/>
    </location>
</feature>
<comment type="function">
    <text evidence="1">Part of a complex that catalyzes the reversible cleavage of acetyl-CoA, allowing growth on acetate as sole source of carbon and energy. The alpha-epsilon subcomponent functions as a carbon monoxide dehydrogenase. The precise role of the epsilon subunit is unclear; it may have a stabilizing role within the alpha(2)epsilon(2) component and/or be involved in electron transfer to FAD during a potential FAD-mediated CO oxidation.</text>
</comment>
<comment type="biophysicochemical properties">
    <phDependence>
        <text>Optimum pH is 8-9.</text>
    </phDependence>
</comment>
<comment type="pathway">
    <text evidence="1">One-carbon metabolism; methanogenesis from acetate.</text>
</comment>
<comment type="subunit">
    <text evidence="1">Heterotetramer of two alpha and two epsilon subunits. The ACDS complex is made up of alpha, epsilon, beta, gamma and delta subunits with a probable stoichiometry of (alpha(2)epsilon(2))(4)-beta(8)-(gamma(1)delta(1))(8).</text>
</comment>
<comment type="similarity">
    <text evidence="1">Belongs to the CdhB family.</text>
</comment>
<name>ACDE1_METMA</name>
<dbReference type="EMBL" id="L26487">
    <property type="protein sequence ID" value="AAC37045.1"/>
    <property type="molecule type" value="Genomic_DNA"/>
</dbReference>
<dbReference type="EMBL" id="AE008384">
    <property type="protein sequence ID" value="AAM31784.1"/>
    <property type="molecule type" value="Genomic_DNA"/>
</dbReference>
<dbReference type="SMR" id="Q49162"/>
<dbReference type="KEGG" id="mma:MM_2088"/>
<dbReference type="PATRIC" id="fig|192952.21.peg.2397"/>
<dbReference type="eggNOG" id="arCOG04408">
    <property type="taxonomic scope" value="Archaea"/>
</dbReference>
<dbReference type="HOGENOM" id="CLU_123700_0_0_2"/>
<dbReference type="UniPathway" id="UPA00642"/>
<dbReference type="Proteomes" id="UP000000595">
    <property type="component" value="Chromosome"/>
</dbReference>
<dbReference type="GO" id="GO:0019385">
    <property type="term" value="P:methanogenesis, from acetate"/>
    <property type="evidence" value="ECO:0007669"/>
    <property type="project" value="UniProtKB-UniRule"/>
</dbReference>
<dbReference type="Gene3D" id="3.40.50.1220">
    <property type="entry name" value="TPP-binding domain"/>
    <property type="match status" value="1"/>
</dbReference>
<dbReference type="HAMAP" id="MF_01134">
    <property type="entry name" value="CdhB"/>
    <property type="match status" value="1"/>
</dbReference>
<dbReference type="InterPro" id="IPR003704">
    <property type="entry name" value="CdhB"/>
</dbReference>
<dbReference type="InterPro" id="IPR029035">
    <property type="entry name" value="DHS-like_NAD/FAD-binding_dom"/>
</dbReference>
<dbReference type="NCBIfam" id="TIGR00315">
    <property type="entry name" value="cdhB"/>
    <property type="match status" value="1"/>
</dbReference>
<dbReference type="Pfam" id="PF02552">
    <property type="entry name" value="CO_dh"/>
    <property type="match status" value="1"/>
</dbReference>
<dbReference type="PIRSF" id="PIRSF006035">
    <property type="entry name" value="CO_dh_b_ACDS_e"/>
    <property type="match status" value="1"/>
</dbReference>
<dbReference type="SUPFAM" id="SSF52467">
    <property type="entry name" value="DHS-like NAD/FAD-binding domain"/>
    <property type="match status" value="1"/>
</dbReference>
<evidence type="ECO:0000255" key="1">
    <source>
        <dbReference type="HAMAP-Rule" id="MF_01134"/>
    </source>
</evidence>
<organism>
    <name type="scientific">Methanosarcina mazei (strain ATCC BAA-159 / DSM 3647 / Goe1 / Go1 / JCM 11833 / OCM 88)</name>
    <name type="common">Methanosarcina frisia</name>
    <dbReference type="NCBI Taxonomy" id="192952"/>
    <lineage>
        <taxon>Archaea</taxon>
        <taxon>Methanobacteriati</taxon>
        <taxon>Methanobacteriota</taxon>
        <taxon>Stenosarchaea group</taxon>
        <taxon>Methanomicrobia</taxon>
        <taxon>Methanosarcinales</taxon>
        <taxon>Methanosarcinaceae</taxon>
        <taxon>Methanosarcina</taxon>
    </lineage>
</organism>